<dbReference type="EMBL" id="CP000560">
    <property type="protein sequence ID" value="ABS72574.1"/>
    <property type="molecule type" value="Genomic_DNA"/>
</dbReference>
<dbReference type="RefSeq" id="WP_007410404.1">
    <property type="nucleotide sequence ID" value="NC_009725.2"/>
</dbReference>
<dbReference type="SMR" id="A7Z0P8"/>
<dbReference type="GeneID" id="93079290"/>
<dbReference type="KEGG" id="bay:RBAM_001510"/>
<dbReference type="HOGENOM" id="CLU_095071_2_1_9"/>
<dbReference type="Proteomes" id="UP000001120">
    <property type="component" value="Chromosome"/>
</dbReference>
<dbReference type="GO" id="GO:0022625">
    <property type="term" value="C:cytosolic large ribosomal subunit"/>
    <property type="evidence" value="ECO:0007669"/>
    <property type="project" value="TreeGrafter"/>
</dbReference>
<dbReference type="GO" id="GO:0070180">
    <property type="term" value="F:large ribosomal subunit rRNA binding"/>
    <property type="evidence" value="ECO:0007669"/>
    <property type="project" value="TreeGrafter"/>
</dbReference>
<dbReference type="GO" id="GO:0003735">
    <property type="term" value="F:structural constituent of ribosome"/>
    <property type="evidence" value="ECO:0007669"/>
    <property type="project" value="InterPro"/>
</dbReference>
<dbReference type="GO" id="GO:0006412">
    <property type="term" value="P:translation"/>
    <property type="evidence" value="ECO:0007669"/>
    <property type="project" value="UniProtKB-UniRule"/>
</dbReference>
<dbReference type="CDD" id="cd00337">
    <property type="entry name" value="Ribosomal_uL14"/>
    <property type="match status" value="1"/>
</dbReference>
<dbReference type="FunFam" id="2.40.150.20:FF:000001">
    <property type="entry name" value="50S ribosomal protein L14"/>
    <property type="match status" value="1"/>
</dbReference>
<dbReference type="Gene3D" id="2.40.150.20">
    <property type="entry name" value="Ribosomal protein L14"/>
    <property type="match status" value="1"/>
</dbReference>
<dbReference type="HAMAP" id="MF_01367">
    <property type="entry name" value="Ribosomal_uL14"/>
    <property type="match status" value="1"/>
</dbReference>
<dbReference type="InterPro" id="IPR000218">
    <property type="entry name" value="Ribosomal_uL14"/>
</dbReference>
<dbReference type="InterPro" id="IPR005745">
    <property type="entry name" value="Ribosomal_uL14_bac-type"/>
</dbReference>
<dbReference type="InterPro" id="IPR019972">
    <property type="entry name" value="Ribosomal_uL14_CS"/>
</dbReference>
<dbReference type="InterPro" id="IPR036853">
    <property type="entry name" value="Ribosomal_uL14_sf"/>
</dbReference>
<dbReference type="NCBIfam" id="TIGR01067">
    <property type="entry name" value="rplN_bact"/>
    <property type="match status" value="1"/>
</dbReference>
<dbReference type="PANTHER" id="PTHR11761">
    <property type="entry name" value="50S/60S RIBOSOMAL PROTEIN L14/L23"/>
    <property type="match status" value="1"/>
</dbReference>
<dbReference type="PANTHER" id="PTHR11761:SF3">
    <property type="entry name" value="LARGE RIBOSOMAL SUBUNIT PROTEIN UL14M"/>
    <property type="match status" value="1"/>
</dbReference>
<dbReference type="Pfam" id="PF00238">
    <property type="entry name" value="Ribosomal_L14"/>
    <property type="match status" value="1"/>
</dbReference>
<dbReference type="SMART" id="SM01374">
    <property type="entry name" value="Ribosomal_L14"/>
    <property type="match status" value="1"/>
</dbReference>
<dbReference type="SUPFAM" id="SSF50193">
    <property type="entry name" value="Ribosomal protein L14"/>
    <property type="match status" value="1"/>
</dbReference>
<dbReference type="PROSITE" id="PS00049">
    <property type="entry name" value="RIBOSOMAL_L14"/>
    <property type="match status" value="1"/>
</dbReference>
<comment type="function">
    <text evidence="1">Binds to 23S rRNA. Forms part of two intersubunit bridges in the 70S ribosome.</text>
</comment>
<comment type="subunit">
    <text evidence="1">Part of the 50S ribosomal subunit. Forms a cluster with proteins L3 and L19. In the 70S ribosome, L14 and L19 interact and together make contacts with the 16S rRNA in bridges B5 and B8.</text>
</comment>
<comment type="similarity">
    <text evidence="1">Belongs to the universal ribosomal protein uL14 family.</text>
</comment>
<keyword id="KW-0687">Ribonucleoprotein</keyword>
<keyword id="KW-0689">Ribosomal protein</keyword>
<keyword id="KW-0694">RNA-binding</keyword>
<keyword id="KW-0699">rRNA-binding</keyword>
<proteinExistence type="inferred from homology"/>
<feature type="chain" id="PRO_1000055508" description="Large ribosomal subunit protein uL14">
    <location>
        <begin position="1"/>
        <end position="122"/>
    </location>
</feature>
<name>RL14_BACVZ</name>
<protein>
    <recommendedName>
        <fullName evidence="1">Large ribosomal subunit protein uL14</fullName>
    </recommendedName>
    <alternativeName>
        <fullName evidence="2">50S ribosomal protein L14</fullName>
    </alternativeName>
</protein>
<gene>
    <name evidence="1" type="primary">rplN</name>
    <name type="ordered locus">RBAM_001510</name>
</gene>
<evidence type="ECO:0000255" key="1">
    <source>
        <dbReference type="HAMAP-Rule" id="MF_01367"/>
    </source>
</evidence>
<evidence type="ECO:0000305" key="2"/>
<sequence length="122" mass="13196">MIQQETRLKVADNSGAREVLTIKVLGGSGRKTANIGDVIVCTVKQATPGGVVKKGEVVRAVIVRTKSGARRTDGSYISFDENACVIIRDDKSPRGTRIFGPVARELRENNFMKIVSLAPEVI</sequence>
<accession>A7Z0P8</accession>
<reference key="1">
    <citation type="journal article" date="2007" name="Nat. Biotechnol.">
        <title>Comparative analysis of the complete genome sequence of the plant growth-promoting bacterium Bacillus amyloliquefaciens FZB42.</title>
        <authorList>
            <person name="Chen X.H."/>
            <person name="Koumoutsi A."/>
            <person name="Scholz R."/>
            <person name="Eisenreich A."/>
            <person name="Schneider K."/>
            <person name="Heinemeyer I."/>
            <person name="Morgenstern B."/>
            <person name="Voss B."/>
            <person name="Hess W.R."/>
            <person name="Reva O."/>
            <person name="Junge H."/>
            <person name="Voigt B."/>
            <person name="Jungblut P.R."/>
            <person name="Vater J."/>
            <person name="Suessmuth R."/>
            <person name="Liesegang H."/>
            <person name="Strittmatter A."/>
            <person name="Gottschalk G."/>
            <person name="Borriss R."/>
        </authorList>
    </citation>
    <scope>NUCLEOTIDE SEQUENCE [LARGE SCALE GENOMIC DNA]</scope>
    <source>
        <strain>DSM 23117 / BGSC 10A6 / LMG 26770 / FZB42</strain>
    </source>
</reference>
<organism>
    <name type="scientific">Bacillus velezensis (strain DSM 23117 / BGSC 10A6 / LMG 26770 / FZB42)</name>
    <name type="common">Bacillus amyloliquefaciens subsp. plantarum</name>
    <dbReference type="NCBI Taxonomy" id="326423"/>
    <lineage>
        <taxon>Bacteria</taxon>
        <taxon>Bacillati</taxon>
        <taxon>Bacillota</taxon>
        <taxon>Bacilli</taxon>
        <taxon>Bacillales</taxon>
        <taxon>Bacillaceae</taxon>
        <taxon>Bacillus</taxon>
        <taxon>Bacillus amyloliquefaciens group</taxon>
    </lineage>
</organism>